<accession>B7MG46</accession>
<comment type="function">
    <text evidence="1">NDH-1 shuttles electrons from NADH, via FMN and iron-sulfur (Fe-S) centers, to quinones in the respiratory chain. The immediate electron acceptor for the enzyme in this species is believed to be ubiquinone. Couples the redox reaction to proton translocation (for every two electrons transferred, four hydrogen ions are translocated across the cytoplasmic membrane), and thus conserves the redox energy in a proton gradient. This subunit may bind ubiquinone.</text>
</comment>
<comment type="catalytic activity">
    <reaction evidence="1">
        <text>a quinone + NADH + 5 H(+)(in) = a quinol + NAD(+) + 4 H(+)(out)</text>
        <dbReference type="Rhea" id="RHEA:57888"/>
        <dbReference type="ChEBI" id="CHEBI:15378"/>
        <dbReference type="ChEBI" id="CHEBI:24646"/>
        <dbReference type="ChEBI" id="CHEBI:57540"/>
        <dbReference type="ChEBI" id="CHEBI:57945"/>
        <dbReference type="ChEBI" id="CHEBI:132124"/>
    </reaction>
</comment>
<comment type="subunit">
    <text evidence="1">NDH-1 is composed of 13 different subunits. Subunits NuoA, H, J, K, L, M, N constitute the membrane sector of the complex.</text>
</comment>
<comment type="subcellular location">
    <subcellularLocation>
        <location evidence="1">Cell inner membrane</location>
        <topology evidence="1">Multi-pass membrane protein</topology>
    </subcellularLocation>
</comment>
<comment type="similarity">
    <text evidence="1">Belongs to the complex I subunit 1 family.</text>
</comment>
<proteinExistence type="inferred from homology"/>
<reference key="1">
    <citation type="journal article" date="2009" name="PLoS Genet.">
        <title>Organised genome dynamics in the Escherichia coli species results in highly diverse adaptive paths.</title>
        <authorList>
            <person name="Touchon M."/>
            <person name="Hoede C."/>
            <person name="Tenaillon O."/>
            <person name="Barbe V."/>
            <person name="Baeriswyl S."/>
            <person name="Bidet P."/>
            <person name="Bingen E."/>
            <person name="Bonacorsi S."/>
            <person name="Bouchier C."/>
            <person name="Bouvet O."/>
            <person name="Calteau A."/>
            <person name="Chiapello H."/>
            <person name="Clermont O."/>
            <person name="Cruveiller S."/>
            <person name="Danchin A."/>
            <person name="Diard M."/>
            <person name="Dossat C."/>
            <person name="Karoui M.E."/>
            <person name="Frapy E."/>
            <person name="Garry L."/>
            <person name="Ghigo J.M."/>
            <person name="Gilles A.M."/>
            <person name="Johnson J."/>
            <person name="Le Bouguenec C."/>
            <person name="Lescat M."/>
            <person name="Mangenot S."/>
            <person name="Martinez-Jehanne V."/>
            <person name="Matic I."/>
            <person name="Nassif X."/>
            <person name="Oztas S."/>
            <person name="Petit M.A."/>
            <person name="Pichon C."/>
            <person name="Rouy Z."/>
            <person name="Ruf C.S."/>
            <person name="Schneider D."/>
            <person name="Tourret J."/>
            <person name="Vacherie B."/>
            <person name="Vallenet D."/>
            <person name="Medigue C."/>
            <person name="Rocha E.P.C."/>
            <person name="Denamur E."/>
        </authorList>
    </citation>
    <scope>NUCLEOTIDE SEQUENCE [LARGE SCALE GENOMIC DNA]</scope>
    <source>
        <strain>S88 / ExPEC</strain>
    </source>
</reference>
<keyword id="KW-0997">Cell inner membrane</keyword>
<keyword id="KW-1003">Cell membrane</keyword>
<keyword id="KW-0472">Membrane</keyword>
<keyword id="KW-0520">NAD</keyword>
<keyword id="KW-0874">Quinone</keyword>
<keyword id="KW-1185">Reference proteome</keyword>
<keyword id="KW-1278">Translocase</keyword>
<keyword id="KW-0812">Transmembrane</keyword>
<keyword id="KW-1133">Transmembrane helix</keyword>
<keyword id="KW-0830">Ubiquinone</keyword>
<dbReference type="EC" id="7.1.1.-" evidence="1"/>
<dbReference type="EMBL" id="CU928161">
    <property type="protein sequence ID" value="CAR03708.1"/>
    <property type="molecule type" value="Genomic_DNA"/>
</dbReference>
<dbReference type="RefSeq" id="WP_000118512.1">
    <property type="nucleotide sequence ID" value="NC_011742.1"/>
</dbReference>
<dbReference type="SMR" id="B7MG46"/>
<dbReference type="KEGG" id="ecz:ECS88_2429"/>
<dbReference type="HOGENOM" id="CLU_015134_0_1_6"/>
<dbReference type="Proteomes" id="UP000000747">
    <property type="component" value="Chromosome"/>
</dbReference>
<dbReference type="GO" id="GO:0005886">
    <property type="term" value="C:plasma membrane"/>
    <property type="evidence" value="ECO:0007669"/>
    <property type="project" value="UniProtKB-SubCell"/>
</dbReference>
<dbReference type="GO" id="GO:0003954">
    <property type="term" value="F:NADH dehydrogenase activity"/>
    <property type="evidence" value="ECO:0007669"/>
    <property type="project" value="TreeGrafter"/>
</dbReference>
<dbReference type="GO" id="GO:0016655">
    <property type="term" value="F:oxidoreductase activity, acting on NAD(P)H, quinone or similar compound as acceptor"/>
    <property type="evidence" value="ECO:0007669"/>
    <property type="project" value="UniProtKB-UniRule"/>
</dbReference>
<dbReference type="GO" id="GO:0048038">
    <property type="term" value="F:quinone binding"/>
    <property type="evidence" value="ECO:0007669"/>
    <property type="project" value="UniProtKB-KW"/>
</dbReference>
<dbReference type="GO" id="GO:0009060">
    <property type="term" value="P:aerobic respiration"/>
    <property type="evidence" value="ECO:0007669"/>
    <property type="project" value="TreeGrafter"/>
</dbReference>
<dbReference type="HAMAP" id="MF_01350">
    <property type="entry name" value="NDH1_NuoH"/>
    <property type="match status" value="1"/>
</dbReference>
<dbReference type="InterPro" id="IPR001694">
    <property type="entry name" value="NADH_UbQ_OxRdtase_su1/FPO"/>
</dbReference>
<dbReference type="InterPro" id="IPR018086">
    <property type="entry name" value="NADH_UbQ_OxRdtase_su1_CS"/>
</dbReference>
<dbReference type="NCBIfam" id="NF004740">
    <property type="entry name" value="PRK06076.1-1"/>
    <property type="match status" value="1"/>
</dbReference>
<dbReference type="NCBIfam" id="NF004741">
    <property type="entry name" value="PRK06076.1-2"/>
    <property type="match status" value="1"/>
</dbReference>
<dbReference type="PANTHER" id="PTHR11432">
    <property type="entry name" value="NADH DEHYDROGENASE SUBUNIT 1"/>
    <property type="match status" value="1"/>
</dbReference>
<dbReference type="PANTHER" id="PTHR11432:SF3">
    <property type="entry name" value="NADH-UBIQUINONE OXIDOREDUCTASE CHAIN 1"/>
    <property type="match status" value="1"/>
</dbReference>
<dbReference type="Pfam" id="PF00146">
    <property type="entry name" value="NADHdh"/>
    <property type="match status" value="1"/>
</dbReference>
<dbReference type="PROSITE" id="PS00667">
    <property type="entry name" value="COMPLEX1_ND1_1"/>
    <property type="match status" value="1"/>
</dbReference>
<dbReference type="PROSITE" id="PS00668">
    <property type="entry name" value="COMPLEX1_ND1_2"/>
    <property type="match status" value="1"/>
</dbReference>
<evidence type="ECO:0000255" key="1">
    <source>
        <dbReference type="HAMAP-Rule" id="MF_01350"/>
    </source>
</evidence>
<name>NUOH_ECO45</name>
<organism>
    <name type="scientific">Escherichia coli O45:K1 (strain S88 / ExPEC)</name>
    <dbReference type="NCBI Taxonomy" id="585035"/>
    <lineage>
        <taxon>Bacteria</taxon>
        <taxon>Pseudomonadati</taxon>
        <taxon>Pseudomonadota</taxon>
        <taxon>Gammaproteobacteria</taxon>
        <taxon>Enterobacterales</taxon>
        <taxon>Enterobacteriaceae</taxon>
        <taxon>Escherichia</taxon>
    </lineage>
</organism>
<sequence>MSWISPELIEILLTVLKAVVILLVVVTCGAFMSFGERRLLGLFQNRYGPNRVGWGGSLQLVADMIKMFFKEDWIPKFSDRVIFTLAPMIAFTSLLLAFAIVPVSPGWVVADLNIGILFFLMMAGLAVYAVLFAGWSSNNKYSLLGAMRASAQTLSYEVFLGLSLMGVVAQAGSFNMTDIVNSQAHVWNVIPQFFGFITFAIAGVAVCHRHPFDQPEAEQELADGYHIEYSGMKFGLFFVGEYIGIVTISALMVTLFFGGWQGPLLPPFIWFALKTAFFMMMFILIRASLPRPRYDQVMSFGWKICLPLTLINLLVTAAVILWQAQ</sequence>
<gene>
    <name evidence="1" type="primary">nuoH</name>
    <name type="ordered locus">ECS88_2429</name>
</gene>
<protein>
    <recommendedName>
        <fullName evidence="1">NADH-quinone oxidoreductase subunit H</fullName>
        <ecNumber evidence="1">7.1.1.-</ecNumber>
    </recommendedName>
    <alternativeName>
        <fullName evidence="1">NADH dehydrogenase I subunit H</fullName>
    </alternativeName>
    <alternativeName>
        <fullName evidence="1">NDH-1 subunit H</fullName>
    </alternativeName>
</protein>
<feature type="chain" id="PRO_1000143590" description="NADH-quinone oxidoreductase subunit H">
    <location>
        <begin position="1"/>
        <end position="325"/>
    </location>
</feature>
<feature type="transmembrane region" description="Helical" evidence="1">
    <location>
        <begin position="11"/>
        <end position="31"/>
    </location>
</feature>
<feature type="transmembrane region" description="Helical" evidence="1">
    <location>
        <begin position="81"/>
        <end position="101"/>
    </location>
</feature>
<feature type="transmembrane region" description="Helical" evidence="1">
    <location>
        <begin position="114"/>
        <end position="134"/>
    </location>
</feature>
<feature type="transmembrane region" description="Helical" evidence="1">
    <location>
        <begin position="154"/>
        <end position="174"/>
    </location>
</feature>
<feature type="transmembrane region" description="Helical" evidence="1">
    <location>
        <begin position="186"/>
        <end position="206"/>
    </location>
</feature>
<feature type="transmembrane region" description="Helical" evidence="1">
    <location>
        <begin position="237"/>
        <end position="257"/>
    </location>
</feature>
<feature type="transmembrane region" description="Helical" evidence="1">
    <location>
        <begin position="265"/>
        <end position="285"/>
    </location>
</feature>
<feature type="transmembrane region" description="Helical" evidence="1">
    <location>
        <begin position="304"/>
        <end position="324"/>
    </location>
</feature>